<organism>
    <name type="scientific">Streptococcus agalactiae serotype III (strain NEM316)</name>
    <dbReference type="NCBI Taxonomy" id="211110"/>
    <lineage>
        <taxon>Bacteria</taxon>
        <taxon>Bacillati</taxon>
        <taxon>Bacillota</taxon>
        <taxon>Bacilli</taxon>
        <taxon>Lactobacillales</taxon>
        <taxon>Streptococcaceae</taxon>
        <taxon>Streptococcus</taxon>
    </lineage>
</organism>
<comment type="function">
    <text evidence="1">Participates actively in the response to hyperosmotic and heat shock by preventing the aggregation of stress-denatured proteins, in association with DnaK and GrpE. It is the nucleotide exchange factor for DnaK and may function as a thermosensor. Unfolded proteins bind initially to DnaJ; upon interaction with the DnaJ-bound protein, DnaK hydrolyzes its bound ATP, resulting in the formation of a stable complex. GrpE releases ADP from DnaK; ATP binding to DnaK triggers the release of the substrate protein, thus completing the reaction cycle. Several rounds of ATP-dependent interactions between DnaJ, DnaK and GrpE are required for fully efficient folding.</text>
</comment>
<comment type="subunit">
    <text evidence="1">Homodimer.</text>
</comment>
<comment type="subcellular location">
    <subcellularLocation>
        <location evidence="1">Cytoplasm</location>
    </subcellularLocation>
</comment>
<comment type="similarity">
    <text evidence="1">Belongs to the GrpE family.</text>
</comment>
<protein>
    <recommendedName>
        <fullName evidence="1">Protein GrpE</fullName>
    </recommendedName>
    <alternativeName>
        <fullName evidence="1">HSP-70 cofactor</fullName>
    </alternativeName>
</protein>
<gene>
    <name evidence="1" type="primary">grpE</name>
    <name type="ordered locus">gbs0095</name>
</gene>
<name>GRPE_STRA3</name>
<sequence length="190" mass="22067">MAVFNKLFKRRHSVSEEIKKDDLQEEVEATETEETVEEVIEEIPEKSELELANERADEFENKYLRAHAEMQNIQRRSSEERQQLQRYRSQDLAKAILPSLDNLERALAVEGLTDDVKKGLEMTRDSLIQALKEEGVEEVEVDSFDHNFHMAVQTLPADDEHPADSIAEVFQKGYKLHERLLRPAMVVVYN</sequence>
<proteinExistence type="inferred from homology"/>
<feature type="chain" id="PRO_0000113865" description="Protein GrpE">
    <location>
        <begin position="1"/>
        <end position="190"/>
    </location>
</feature>
<accession>Q8E7Q8</accession>
<reference key="1">
    <citation type="journal article" date="2002" name="Mol. Microbiol.">
        <title>Genome sequence of Streptococcus agalactiae, a pathogen causing invasive neonatal disease.</title>
        <authorList>
            <person name="Glaser P."/>
            <person name="Rusniok C."/>
            <person name="Buchrieser C."/>
            <person name="Chevalier F."/>
            <person name="Frangeul L."/>
            <person name="Msadek T."/>
            <person name="Zouine M."/>
            <person name="Couve E."/>
            <person name="Lalioui L."/>
            <person name="Poyart C."/>
            <person name="Trieu-Cuot P."/>
            <person name="Kunst F."/>
        </authorList>
    </citation>
    <scope>NUCLEOTIDE SEQUENCE [LARGE SCALE GENOMIC DNA]</scope>
    <source>
        <strain>NEM316</strain>
    </source>
</reference>
<keyword id="KW-0143">Chaperone</keyword>
<keyword id="KW-0963">Cytoplasm</keyword>
<keyword id="KW-0346">Stress response</keyword>
<dbReference type="EMBL" id="AL766843">
    <property type="protein sequence ID" value="CAD45740.1"/>
    <property type="molecule type" value="Genomic_DNA"/>
</dbReference>
<dbReference type="RefSeq" id="WP_001865751.1">
    <property type="nucleotide sequence ID" value="NC_004368.1"/>
</dbReference>
<dbReference type="SMR" id="Q8E7Q8"/>
<dbReference type="KEGG" id="san:gbs0095"/>
<dbReference type="eggNOG" id="COG0576">
    <property type="taxonomic scope" value="Bacteria"/>
</dbReference>
<dbReference type="HOGENOM" id="CLU_057217_6_3_9"/>
<dbReference type="Proteomes" id="UP000000823">
    <property type="component" value="Chromosome"/>
</dbReference>
<dbReference type="GO" id="GO:0005737">
    <property type="term" value="C:cytoplasm"/>
    <property type="evidence" value="ECO:0007669"/>
    <property type="project" value="UniProtKB-SubCell"/>
</dbReference>
<dbReference type="GO" id="GO:0000774">
    <property type="term" value="F:adenyl-nucleotide exchange factor activity"/>
    <property type="evidence" value="ECO:0007669"/>
    <property type="project" value="InterPro"/>
</dbReference>
<dbReference type="GO" id="GO:0042803">
    <property type="term" value="F:protein homodimerization activity"/>
    <property type="evidence" value="ECO:0007669"/>
    <property type="project" value="InterPro"/>
</dbReference>
<dbReference type="GO" id="GO:0051087">
    <property type="term" value="F:protein-folding chaperone binding"/>
    <property type="evidence" value="ECO:0007669"/>
    <property type="project" value="InterPro"/>
</dbReference>
<dbReference type="GO" id="GO:0051082">
    <property type="term" value="F:unfolded protein binding"/>
    <property type="evidence" value="ECO:0007669"/>
    <property type="project" value="TreeGrafter"/>
</dbReference>
<dbReference type="GO" id="GO:0006457">
    <property type="term" value="P:protein folding"/>
    <property type="evidence" value="ECO:0007669"/>
    <property type="project" value="InterPro"/>
</dbReference>
<dbReference type="CDD" id="cd00446">
    <property type="entry name" value="GrpE"/>
    <property type="match status" value="1"/>
</dbReference>
<dbReference type="Gene3D" id="3.90.20.20">
    <property type="match status" value="1"/>
</dbReference>
<dbReference type="Gene3D" id="2.30.22.10">
    <property type="entry name" value="Head domain of nucleotide exchange factor GrpE"/>
    <property type="match status" value="1"/>
</dbReference>
<dbReference type="HAMAP" id="MF_01151">
    <property type="entry name" value="GrpE"/>
    <property type="match status" value="1"/>
</dbReference>
<dbReference type="InterPro" id="IPR000740">
    <property type="entry name" value="GrpE"/>
</dbReference>
<dbReference type="InterPro" id="IPR013805">
    <property type="entry name" value="GrpE_coiled_coil"/>
</dbReference>
<dbReference type="InterPro" id="IPR009012">
    <property type="entry name" value="GrpE_head"/>
</dbReference>
<dbReference type="NCBIfam" id="NF010738">
    <property type="entry name" value="PRK14140.1"/>
    <property type="match status" value="1"/>
</dbReference>
<dbReference type="NCBIfam" id="NF010753">
    <property type="entry name" value="PRK14156.1"/>
    <property type="match status" value="1"/>
</dbReference>
<dbReference type="PANTHER" id="PTHR21237">
    <property type="entry name" value="GRPE PROTEIN"/>
    <property type="match status" value="1"/>
</dbReference>
<dbReference type="PANTHER" id="PTHR21237:SF23">
    <property type="entry name" value="GRPE PROTEIN HOMOLOG, MITOCHONDRIAL"/>
    <property type="match status" value="1"/>
</dbReference>
<dbReference type="Pfam" id="PF01025">
    <property type="entry name" value="GrpE"/>
    <property type="match status" value="1"/>
</dbReference>
<dbReference type="PRINTS" id="PR00773">
    <property type="entry name" value="GRPEPROTEIN"/>
</dbReference>
<dbReference type="SUPFAM" id="SSF58014">
    <property type="entry name" value="Coiled-coil domain of nucleotide exchange factor GrpE"/>
    <property type="match status" value="1"/>
</dbReference>
<dbReference type="SUPFAM" id="SSF51064">
    <property type="entry name" value="Head domain of nucleotide exchange factor GrpE"/>
    <property type="match status" value="1"/>
</dbReference>
<dbReference type="PROSITE" id="PS01071">
    <property type="entry name" value="GRPE"/>
    <property type="match status" value="1"/>
</dbReference>
<evidence type="ECO:0000255" key="1">
    <source>
        <dbReference type="HAMAP-Rule" id="MF_01151"/>
    </source>
</evidence>